<feature type="chain" id="PRO_0000212052" description="Universal stress protein B homolog">
    <location>
        <begin position="1"/>
        <end position="107"/>
    </location>
</feature>
<feature type="transmembrane region" description="Helical" evidence="1">
    <location>
        <begin position="6"/>
        <end position="26"/>
    </location>
</feature>
<feature type="transmembrane region" description="Helical" evidence="1">
    <location>
        <begin position="86"/>
        <end position="106"/>
    </location>
</feature>
<protein>
    <recommendedName>
        <fullName evidence="1">Universal stress protein B homolog</fullName>
    </recommendedName>
</protein>
<organism>
    <name type="scientific">Vibrio vulnificus (strain CMCP6)</name>
    <dbReference type="NCBI Taxonomy" id="216895"/>
    <lineage>
        <taxon>Bacteria</taxon>
        <taxon>Pseudomonadati</taxon>
        <taxon>Pseudomonadota</taxon>
        <taxon>Gammaproteobacteria</taxon>
        <taxon>Vibrionales</taxon>
        <taxon>Vibrionaceae</taxon>
        <taxon>Vibrio</taxon>
    </lineage>
</organism>
<keyword id="KW-0997">Cell inner membrane</keyword>
<keyword id="KW-1003">Cell membrane</keyword>
<keyword id="KW-0472">Membrane</keyword>
<keyword id="KW-0812">Transmembrane</keyword>
<keyword id="KW-1133">Transmembrane helix</keyword>
<accession>Q8DD90</accession>
<evidence type="ECO:0000255" key="1">
    <source>
        <dbReference type="HAMAP-Rule" id="MF_01088"/>
    </source>
</evidence>
<gene>
    <name evidence="1" type="primary">uspB</name>
    <name type="ordered locus">VV1_1117</name>
</gene>
<sequence>MINGDIILFALMVVTGVNLARYLTALRSLIYIMREAHPLLYQQVDGNGFFTTHGNVTKQVRLYHYLKSKEYHHHHDEVFTGKCDRVRELFVLSVSLTGVTLLAAFLL</sequence>
<proteinExistence type="inferred from homology"/>
<name>USPB_VIBVU</name>
<comment type="subcellular location">
    <subcellularLocation>
        <location evidence="1">Cell inner membrane</location>
        <topology evidence="1">Multi-pass membrane protein</topology>
    </subcellularLocation>
</comment>
<comment type="similarity">
    <text evidence="1">Belongs to the universal stress protein B family.</text>
</comment>
<dbReference type="EMBL" id="AE016795">
    <property type="protein sequence ID" value="AAO09593.1"/>
    <property type="molecule type" value="Genomic_DNA"/>
</dbReference>
<dbReference type="RefSeq" id="WP_011079133.1">
    <property type="nucleotide sequence ID" value="NC_004459.3"/>
</dbReference>
<dbReference type="GeneID" id="93895396"/>
<dbReference type="KEGG" id="vvu:VV1_1117"/>
<dbReference type="HOGENOM" id="CLU_151816_0_0_6"/>
<dbReference type="Proteomes" id="UP000002275">
    <property type="component" value="Chromosome 1"/>
</dbReference>
<dbReference type="GO" id="GO:0005886">
    <property type="term" value="C:plasma membrane"/>
    <property type="evidence" value="ECO:0007669"/>
    <property type="project" value="UniProtKB-SubCell"/>
</dbReference>
<dbReference type="HAMAP" id="MF_01088">
    <property type="entry name" value="UspB"/>
    <property type="match status" value="1"/>
</dbReference>
<dbReference type="InterPro" id="IPR019598">
    <property type="entry name" value="Universal_stress_protein_B"/>
</dbReference>
<dbReference type="NCBIfam" id="NF003435">
    <property type="entry name" value="PRK04960.1"/>
    <property type="match status" value="1"/>
</dbReference>
<dbReference type="Pfam" id="PF10625">
    <property type="entry name" value="UspB"/>
    <property type="match status" value="1"/>
</dbReference>
<reference key="1">
    <citation type="submission" date="2002-12" db="EMBL/GenBank/DDBJ databases">
        <title>Complete genome sequence of Vibrio vulnificus CMCP6.</title>
        <authorList>
            <person name="Rhee J.H."/>
            <person name="Kim S.Y."/>
            <person name="Chung S.S."/>
            <person name="Kim J.J."/>
            <person name="Moon Y.H."/>
            <person name="Jeong H."/>
            <person name="Choy H.E."/>
        </authorList>
    </citation>
    <scope>NUCLEOTIDE SEQUENCE [LARGE SCALE GENOMIC DNA]</scope>
    <source>
        <strain>CMCP6</strain>
    </source>
</reference>